<accession>Q0BHY7</accession>
<gene>
    <name evidence="1" type="primary">tolB</name>
    <name type="ordered locus">Bamb_0677</name>
</gene>
<evidence type="ECO:0000255" key="1">
    <source>
        <dbReference type="HAMAP-Rule" id="MF_00671"/>
    </source>
</evidence>
<evidence type="ECO:0000256" key="2">
    <source>
        <dbReference type="SAM" id="MobiDB-lite"/>
    </source>
</evidence>
<name>TOLB_BURCM</name>
<proteinExistence type="inferred from homology"/>
<dbReference type="EMBL" id="CP000440">
    <property type="protein sequence ID" value="ABI86236.1"/>
    <property type="molecule type" value="Genomic_DNA"/>
</dbReference>
<dbReference type="RefSeq" id="WP_011656067.1">
    <property type="nucleotide sequence ID" value="NC_008390.1"/>
</dbReference>
<dbReference type="SMR" id="Q0BHY7"/>
<dbReference type="GeneID" id="93083912"/>
<dbReference type="KEGG" id="bam:Bamb_0677"/>
<dbReference type="PATRIC" id="fig|339670.21.peg.919"/>
<dbReference type="eggNOG" id="COG0823">
    <property type="taxonomic scope" value="Bacteria"/>
</dbReference>
<dbReference type="Proteomes" id="UP000000662">
    <property type="component" value="Chromosome 1"/>
</dbReference>
<dbReference type="GO" id="GO:0042597">
    <property type="term" value="C:periplasmic space"/>
    <property type="evidence" value="ECO:0007669"/>
    <property type="project" value="UniProtKB-SubCell"/>
</dbReference>
<dbReference type="GO" id="GO:0051301">
    <property type="term" value="P:cell division"/>
    <property type="evidence" value="ECO:0007669"/>
    <property type="project" value="UniProtKB-UniRule"/>
</dbReference>
<dbReference type="GO" id="GO:0017038">
    <property type="term" value="P:protein import"/>
    <property type="evidence" value="ECO:0007669"/>
    <property type="project" value="InterPro"/>
</dbReference>
<dbReference type="Gene3D" id="2.120.10.30">
    <property type="entry name" value="TolB, C-terminal domain"/>
    <property type="match status" value="1"/>
</dbReference>
<dbReference type="Gene3D" id="3.40.50.10070">
    <property type="entry name" value="TolB, N-terminal domain"/>
    <property type="match status" value="1"/>
</dbReference>
<dbReference type="HAMAP" id="MF_00671">
    <property type="entry name" value="TolB"/>
    <property type="match status" value="1"/>
</dbReference>
<dbReference type="InterPro" id="IPR011042">
    <property type="entry name" value="6-blade_b-propeller_TolB-like"/>
</dbReference>
<dbReference type="InterPro" id="IPR011659">
    <property type="entry name" value="PD40"/>
</dbReference>
<dbReference type="InterPro" id="IPR014167">
    <property type="entry name" value="Tol-Pal_TolB"/>
</dbReference>
<dbReference type="InterPro" id="IPR007195">
    <property type="entry name" value="TolB_N"/>
</dbReference>
<dbReference type="NCBIfam" id="TIGR02800">
    <property type="entry name" value="propeller_TolB"/>
    <property type="match status" value="1"/>
</dbReference>
<dbReference type="PANTHER" id="PTHR36842:SF1">
    <property type="entry name" value="PROTEIN TOLB"/>
    <property type="match status" value="1"/>
</dbReference>
<dbReference type="PANTHER" id="PTHR36842">
    <property type="entry name" value="PROTEIN TOLB HOMOLOG"/>
    <property type="match status" value="1"/>
</dbReference>
<dbReference type="Pfam" id="PF07676">
    <property type="entry name" value="PD40"/>
    <property type="match status" value="5"/>
</dbReference>
<dbReference type="Pfam" id="PF04052">
    <property type="entry name" value="TolB_N"/>
    <property type="match status" value="1"/>
</dbReference>
<dbReference type="SUPFAM" id="SSF52964">
    <property type="entry name" value="TolB, N-terminal domain"/>
    <property type="match status" value="1"/>
</dbReference>
<dbReference type="SUPFAM" id="SSF69304">
    <property type="entry name" value="Tricorn protease N-terminal domain"/>
    <property type="match status" value="1"/>
</dbReference>
<protein>
    <recommendedName>
        <fullName evidence="1">Tol-Pal system protein TolB</fullName>
    </recommendedName>
</protein>
<keyword id="KW-0131">Cell cycle</keyword>
<keyword id="KW-0132">Cell division</keyword>
<keyword id="KW-0574">Periplasm</keyword>
<keyword id="KW-0732">Signal</keyword>
<feature type="signal peptide" evidence="1">
    <location>
        <begin position="1"/>
        <end position="26"/>
    </location>
</feature>
<feature type="chain" id="PRO_5000127255" description="Tol-Pal system protein TolB" evidence="1">
    <location>
        <begin position="27"/>
        <end position="431"/>
    </location>
</feature>
<feature type="region of interest" description="Disordered" evidence="2">
    <location>
        <begin position="411"/>
        <end position="431"/>
    </location>
</feature>
<sequence>MRLMTKLGFRALVASCLIAAGAAANAQVNVLITGVGSTQFPIATANFANEAGLPQQVTSIVRADLARSGKFTNIDAGSTPVPETASVDLGAWKAKGANAFVAGSVNREANGQYKVNFILYDTVKQQSLGGLSLTATDTTLRTAGHKIADYIYQKLLGVRGVFATRLSYVIKTGNRYQLQISDSDGQNARIALSSTEPIISPAWSPSGTKVAYVSFERKKPIVYIHDLPTGRRYMVSDQKGNNSAPAWSPDSNTLAVALSLTGNTQIYTVNANGGGLRRLTQSSSIDTEPYYSPDGRWIYFTSDRGGAPQIYRMPAQGESAGAAQRVTFTGSYNTSPRISPDGKLLAYISRTGGGFKLYVQDLQTGAANAITNTNRDESPSFAANGQYLLYATQSGGRNVLAAVPSDGSAPPQILSVQGGSVREPSWGPFMQ</sequence>
<reference key="1">
    <citation type="submission" date="2006-08" db="EMBL/GenBank/DDBJ databases">
        <title>Complete sequence of chromosome 1 of Burkholderia cepacia AMMD.</title>
        <authorList>
            <person name="Copeland A."/>
            <person name="Lucas S."/>
            <person name="Lapidus A."/>
            <person name="Barry K."/>
            <person name="Detter J.C."/>
            <person name="Glavina del Rio T."/>
            <person name="Hammon N."/>
            <person name="Israni S."/>
            <person name="Pitluck S."/>
            <person name="Bruce D."/>
            <person name="Chain P."/>
            <person name="Malfatti S."/>
            <person name="Shin M."/>
            <person name="Vergez L."/>
            <person name="Schmutz J."/>
            <person name="Larimer F."/>
            <person name="Land M."/>
            <person name="Hauser L."/>
            <person name="Kyrpides N."/>
            <person name="Kim E."/>
            <person name="Parke J."/>
            <person name="Coenye T."/>
            <person name="Konstantinidis K."/>
            <person name="Ramette A."/>
            <person name="Tiedje J."/>
            <person name="Richardson P."/>
        </authorList>
    </citation>
    <scope>NUCLEOTIDE SEQUENCE [LARGE SCALE GENOMIC DNA]</scope>
    <source>
        <strain>ATCC BAA-244 / DSM 16087 / CCUG 44356 / LMG 19182 / AMMD</strain>
    </source>
</reference>
<organism>
    <name type="scientific">Burkholderia ambifaria (strain ATCC BAA-244 / DSM 16087 / CCUG 44356 / LMG 19182 / AMMD)</name>
    <name type="common">Burkholderia cepacia (strain AMMD)</name>
    <dbReference type="NCBI Taxonomy" id="339670"/>
    <lineage>
        <taxon>Bacteria</taxon>
        <taxon>Pseudomonadati</taxon>
        <taxon>Pseudomonadota</taxon>
        <taxon>Betaproteobacteria</taxon>
        <taxon>Burkholderiales</taxon>
        <taxon>Burkholderiaceae</taxon>
        <taxon>Burkholderia</taxon>
        <taxon>Burkholderia cepacia complex</taxon>
    </lineage>
</organism>
<comment type="function">
    <text evidence="1">Part of the Tol-Pal system, which plays a role in outer membrane invagination during cell division and is important for maintaining outer membrane integrity.</text>
</comment>
<comment type="subunit">
    <text evidence="1">The Tol-Pal system is composed of five core proteins: the inner membrane proteins TolA, TolQ and TolR, the periplasmic protein TolB and the outer membrane protein Pal. They form a network linking the inner and outer membranes and the peptidoglycan layer.</text>
</comment>
<comment type="subcellular location">
    <subcellularLocation>
        <location evidence="1">Periplasm</location>
    </subcellularLocation>
</comment>
<comment type="similarity">
    <text evidence="1">Belongs to the TolB family.</text>
</comment>